<accession>A6KYY1</accession>
<proteinExistence type="inferred from homology"/>
<organism>
    <name type="scientific">Phocaeicola vulgatus (strain ATCC 8482 / DSM 1447 / JCM 5826 / CCUG 4940 / NBRC 14291 / NCTC 11154)</name>
    <name type="common">Bacteroides vulgatus</name>
    <dbReference type="NCBI Taxonomy" id="435590"/>
    <lineage>
        <taxon>Bacteria</taxon>
        <taxon>Pseudomonadati</taxon>
        <taxon>Bacteroidota</taxon>
        <taxon>Bacteroidia</taxon>
        <taxon>Bacteroidales</taxon>
        <taxon>Bacteroidaceae</taxon>
        <taxon>Phocaeicola</taxon>
    </lineage>
</organism>
<gene>
    <name type="ordered locus">BVU_0950</name>
</gene>
<evidence type="ECO:0000250" key="1"/>
<evidence type="ECO:0000255" key="2"/>
<evidence type="ECO:0000305" key="3"/>
<protein>
    <recommendedName>
        <fullName>Glycosyl hydrolase family 109 protein 3</fullName>
        <ecNumber>3.2.1.-</ecNumber>
    </recommendedName>
</protein>
<sequence>MKLKKLLLSVLMLLSISGLQAQSLSPSTQIHWDKGTLVIETPERPTDQQHVLGLTAPKMETVRVAFVGLGMRGPWAVWRFCNIPGVEVVALCDYEEDRAEASQKYLRDASLIPADIYSGEKGYETLCQRPDIDLVYIATDWNHHFPVAKYAMKHGKHVAIEVPSAMNLEQCWSLIDLSEQTRLHCFILENCCYDYYEMNALAMAKDGVFGEIIRAEGAYIHELSAFWKSYWQDPNDNDTDNLHWRMKYNMENRGDVYATHGLGPVAQCMDIHRGDRFTTLVAMDTESFVGKQYVENLTGKEPKEFRNGDHTTTLMRTARGKVVEIQHNVMTPQPYNRLFKLTGTKGYATKYPTPEYALSGDVMKDTAPNMDDINAHSFLNDAQKEALEKKYYHPILTKFGEKGRAMGHGGMDYIMDARLVYCLQNGLPLDMDVYDLAEWCCLSELGALSMDNNCAAVTFPDFTRGHWDEMKGYKHAYASAEEEEATEAKAEAYTIAQKEVAAAANLWTLYDNVKNAADEKAQDKALKIYQRAKAKAHQQLAKKLKVKK</sequence>
<comment type="function">
    <text evidence="1">Glycosidase.</text>
</comment>
<comment type="cofactor">
    <cofactor evidence="1">
        <name>NAD(+)</name>
        <dbReference type="ChEBI" id="CHEBI:57540"/>
    </cofactor>
    <text evidence="1">Binds 1 NAD(+) per subunit. The NAD(+) cannot dissociate.</text>
</comment>
<comment type="similarity">
    <text evidence="3">Belongs to the Gfo/Idh/MocA family. Glycosyl hydrolase 109 subfamily.</text>
</comment>
<feature type="signal peptide" evidence="2">
    <location>
        <begin position="1"/>
        <end position="21"/>
    </location>
</feature>
<feature type="chain" id="PRO_0000348555" description="Glycosyl hydrolase family 109 protein 3">
    <location>
        <begin position="22"/>
        <end position="548"/>
    </location>
</feature>
<feature type="binding site" evidence="1">
    <location>
        <begin position="71"/>
        <end position="72"/>
    </location>
    <ligand>
        <name>NAD(+)</name>
        <dbReference type="ChEBI" id="CHEBI:57540"/>
    </ligand>
</feature>
<feature type="binding site" evidence="1">
    <location>
        <position position="93"/>
    </location>
    <ligand>
        <name>NAD(+)</name>
        <dbReference type="ChEBI" id="CHEBI:57540"/>
    </ligand>
</feature>
<feature type="binding site" evidence="1">
    <location>
        <begin position="141"/>
        <end position="144"/>
    </location>
    <ligand>
        <name>NAD(+)</name>
        <dbReference type="ChEBI" id="CHEBI:57540"/>
    </ligand>
</feature>
<feature type="binding site" evidence="1">
    <location>
        <begin position="161"/>
        <end position="162"/>
    </location>
    <ligand>
        <name>NAD(+)</name>
        <dbReference type="ChEBI" id="CHEBI:57540"/>
    </ligand>
</feature>
<feature type="binding site" evidence="1">
    <location>
        <position position="190"/>
    </location>
    <ligand>
        <name>NAD(+)</name>
        <dbReference type="ChEBI" id="CHEBI:57540"/>
    </ligand>
</feature>
<feature type="binding site" evidence="1">
    <location>
        <position position="219"/>
    </location>
    <ligand>
        <name>substrate</name>
    </ligand>
</feature>
<feature type="binding site" evidence="1">
    <location>
        <begin position="240"/>
        <end position="244"/>
    </location>
    <ligand>
        <name>NAD(+)</name>
        <dbReference type="ChEBI" id="CHEBI:57540"/>
    </ligand>
</feature>
<feature type="binding site" evidence="1">
    <location>
        <position position="245"/>
    </location>
    <ligand>
        <name>substrate</name>
    </ligand>
</feature>
<feature type="binding site" evidence="1">
    <location>
        <begin position="257"/>
        <end position="260"/>
    </location>
    <ligand>
        <name>substrate</name>
    </ligand>
</feature>
<feature type="binding site" evidence="1">
    <location>
        <position position="257"/>
    </location>
    <ligand>
        <name>NAD(+)</name>
        <dbReference type="ChEBI" id="CHEBI:57540"/>
    </ligand>
</feature>
<feature type="binding site" evidence="1">
    <location>
        <position position="335"/>
    </location>
    <ligand>
        <name>substrate</name>
    </ligand>
</feature>
<reference key="1">
    <citation type="journal article" date="2007" name="PLoS Biol.">
        <title>Evolution of symbiotic bacteria in the distal human intestine.</title>
        <authorList>
            <person name="Xu J."/>
            <person name="Mahowald M.A."/>
            <person name="Ley R.E."/>
            <person name="Lozupone C.A."/>
            <person name="Hamady M."/>
            <person name="Martens E.C."/>
            <person name="Henrissat B."/>
            <person name="Coutinho P.M."/>
            <person name="Minx P."/>
            <person name="Latreille P."/>
            <person name="Cordum H."/>
            <person name="Van Brunt A."/>
            <person name="Kim K."/>
            <person name="Fulton R.S."/>
            <person name="Fulton L.A."/>
            <person name="Clifton S.W."/>
            <person name="Wilson R.K."/>
            <person name="Knight R.D."/>
            <person name="Gordon J.I."/>
        </authorList>
    </citation>
    <scope>NUCLEOTIDE SEQUENCE [LARGE SCALE GENOMIC DNA]</scope>
    <source>
        <strain>ATCC 8482 / DSM 1447 / JCM 5826 / CCUG 4940 / NBRC 14291 / NCTC 11154</strain>
    </source>
</reference>
<name>G1093_PHOV8</name>
<keyword id="KW-0326">Glycosidase</keyword>
<keyword id="KW-0378">Hydrolase</keyword>
<keyword id="KW-0520">NAD</keyword>
<keyword id="KW-0732">Signal</keyword>
<dbReference type="EC" id="3.2.1.-"/>
<dbReference type="EMBL" id="CP000139">
    <property type="protein sequence ID" value="ABR38645.1"/>
    <property type="molecule type" value="Genomic_DNA"/>
</dbReference>
<dbReference type="RefSeq" id="WP_011964970.1">
    <property type="nucleotide sequence ID" value="NC_009614.1"/>
</dbReference>
<dbReference type="SMR" id="A6KYY1"/>
<dbReference type="STRING" id="435590.BVU_0950"/>
<dbReference type="CAZy" id="GH109">
    <property type="family name" value="Glycoside Hydrolase Family 109"/>
</dbReference>
<dbReference type="PaxDb" id="435590-BVU_0950"/>
<dbReference type="GeneID" id="5301917"/>
<dbReference type="KEGG" id="bvu:BVU_0950"/>
<dbReference type="PATRIC" id="fig|435590.9.peg.982"/>
<dbReference type="eggNOG" id="COG0673">
    <property type="taxonomic scope" value="Bacteria"/>
</dbReference>
<dbReference type="HOGENOM" id="CLU_046965_0_0_10"/>
<dbReference type="BioCyc" id="BVUL435590:G1G59-995-MONOMER"/>
<dbReference type="Proteomes" id="UP000002861">
    <property type="component" value="Chromosome"/>
</dbReference>
<dbReference type="GO" id="GO:0016798">
    <property type="term" value="F:hydrolase activity, acting on glycosyl bonds"/>
    <property type="evidence" value="ECO:0007669"/>
    <property type="project" value="UniProtKB-KW"/>
</dbReference>
<dbReference type="GO" id="GO:0000166">
    <property type="term" value="F:nucleotide binding"/>
    <property type="evidence" value="ECO:0007669"/>
    <property type="project" value="InterPro"/>
</dbReference>
<dbReference type="Gene3D" id="3.30.360.10">
    <property type="entry name" value="Dihydrodipicolinate Reductase, domain 2"/>
    <property type="match status" value="1"/>
</dbReference>
<dbReference type="Gene3D" id="3.40.50.720">
    <property type="entry name" value="NAD(P)-binding Rossmann-like Domain"/>
    <property type="match status" value="1"/>
</dbReference>
<dbReference type="InterPro" id="IPR000683">
    <property type="entry name" value="Gfo/Idh/MocA-like_OxRdtase_N"/>
</dbReference>
<dbReference type="InterPro" id="IPR050463">
    <property type="entry name" value="Gfo/Idh/MocA_oxidrdct_glycsds"/>
</dbReference>
<dbReference type="InterPro" id="IPR049303">
    <property type="entry name" value="Glyco_hydro_109_C"/>
</dbReference>
<dbReference type="InterPro" id="IPR036291">
    <property type="entry name" value="NAD(P)-bd_dom_sf"/>
</dbReference>
<dbReference type="PANTHER" id="PTHR43818">
    <property type="entry name" value="BCDNA.GH03377"/>
    <property type="match status" value="1"/>
</dbReference>
<dbReference type="PANTHER" id="PTHR43818:SF1">
    <property type="entry name" value="GLYCOSYL HYDROLASE FAMILY 109 PROTEIN"/>
    <property type="match status" value="1"/>
</dbReference>
<dbReference type="Pfam" id="PF01408">
    <property type="entry name" value="GFO_IDH_MocA"/>
    <property type="match status" value="1"/>
</dbReference>
<dbReference type="Pfam" id="PF21252">
    <property type="entry name" value="Glyco_hydro_109_C"/>
    <property type="match status" value="1"/>
</dbReference>
<dbReference type="SUPFAM" id="SSF55347">
    <property type="entry name" value="Glyceraldehyde-3-phosphate dehydrogenase-like, C-terminal domain"/>
    <property type="match status" value="1"/>
</dbReference>
<dbReference type="SUPFAM" id="SSF51735">
    <property type="entry name" value="NAD(P)-binding Rossmann-fold domains"/>
    <property type="match status" value="1"/>
</dbReference>